<keyword id="KW-0131">Cell cycle</keyword>
<keyword id="KW-0132">Cell division</keyword>
<keyword id="KW-1003">Cell membrane</keyword>
<keyword id="KW-0175">Coiled coil</keyword>
<keyword id="KW-0472">Membrane</keyword>
<keyword id="KW-0717">Septation</keyword>
<keyword id="KW-0812">Transmembrane</keyword>
<keyword id="KW-1133">Transmembrane helix</keyword>
<accession>Q5XD04</accession>
<organism>
    <name type="scientific">Streptococcus pyogenes serotype M6 (strain ATCC BAA-946 / MGAS10394)</name>
    <dbReference type="NCBI Taxonomy" id="286636"/>
    <lineage>
        <taxon>Bacteria</taxon>
        <taxon>Bacillati</taxon>
        <taxon>Bacillota</taxon>
        <taxon>Bacilli</taxon>
        <taxon>Lactobacillales</taxon>
        <taxon>Streptococcaceae</taxon>
        <taxon>Streptococcus</taxon>
    </lineage>
</organism>
<dbReference type="EMBL" id="CP000003">
    <property type="protein sequence ID" value="AAT86709.1"/>
    <property type="molecule type" value="Genomic_DNA"/>
</dbReference>
<dbReference type="RefSeq" id="WP_011017601.1">
    <property type="nucleotide sequence ID" value="NC_006086.1"/>
</dbReference>
<dbReference type="SMR" id="Q5XD04"/>
<dbReference type="KEGG" id="spa:M6_Spy0574"/>
<dbReference type="HOGENOM" id="CLU_034079_2_0_9"/>
<dbReference type="Proteomes" id="UP000001167">
    <property type="component" value="Chromosome"/>
</dbReference>
<dbReference type="GO" id="GO:0005886">
    <property type="term" value="C:plasma membrane"/>
    <property type="evidence" value="ECO:0007669"/>
    <property type="project" value="UniProtKB-SubCell"/>
</dbReference>
<dbReference type="GO" id="GO:0005940">
    <property type="term" value="C:septin ring"/>
    <property type="evidence" value="ECO:0007669"/>
    <property type="project" value="InterPro"/>
</dbReference>
<dbReference type="GO" id="GO:0000917">
    <property type="term" value="P:division septum assembly"/>
    <property type="evidence" value="ECO:0007669"/>
    <property type="project" value="UniProtKB-KW"/>
</dbReference>
<dbReference type="GO" id="GO:0000921">
    <property type="term" value="P:septin ring assembly"/>
    <property type="evidence" value="ECO:0007669"/>
    <property type="project" value="InterPro"/>
</dbReference>
<dbReference type="HAMAP" id="MF_00728">
    <property type="entry name" value="EzrA"/>
    <property type="match status" value="1"/>
</dbReference>
<dbReference type="InterPro" id="IPR010379">
    <property type="entry name" value="EzrA"/>
</dbReference>
<dbReference type="NCBIfam" id="NF003407">
    <property type="entry name" value="PRK04778.1-1"/>
    <property type="match status" value="1"/>
</dbReference>
<dbReference type="NCBIfam" id="NF003410">
    <property type="entry name" value="PRK04778.1-4"/>
    <property type="match status" value="1"/>
</dbReference>
<dbReference type="Pfam" id="PF06160">
    <property type="entry name" value="EzrA"/>
    <property type="match status" value="1"/>
</dbReference>
<gene>
    <name evidence="1" type="primary">ezrA</name>
    <name type="ordered locus">M6_Spy0574</name>
</gene>
<reference key="1">
    <citation type="journal article" date="2004" name="J. Infect. Dis.">
        <title>Progress toward characterization of the group A Streptococcus metagenome: complete genome sequence of a macrolide-resistant serotype M6 strain.</title>
        <authorList>
            <person name="Banks D.J."/>
            <person name="Porcella S.F."/>
            <person name="Barbian K.D."/>
            <person name="Beres S.B."/>
            <person name="Philips L.E."/>
            <person name="Voyich J.M."/>
            <person name="DeLeo F.R."/>
            <person name="Martin J.M."/>
            <person name="Somerville G.A."/>
            <person name="Musser J.M."/>
        </authorList>
    </citation>
    <scope>NUCLEOTIDE SEQUENCE [LARGE SCALE GENOMIC DNA]</scope>
    <source>
        <strain>ATCC BAA-946 / MGAS10394</strain>
    </source>
</reference>
<protein>
    <recommendedName>
        <fullName evidence="1">Septation ring formation regulator EzrA</fullName>
    </recommendedName>
</protein>
<sequence length="574" mass="66061">MSSGIILLIVAIVLLVIIAYLVGVIIRKRNDSLITSLEERKQALFALPVNDEIEEVKSLHLIGQSQTSFREWNQKWVDLTVNSFADIENHIFEAENLNDTFNFIRAKHEINSVESQLNLVEEDIASIREALNILKEQEEKNSARVTHALDLYEKLQASISENEDNFGSTMPEIDKQMKNIETEFSQFVALNSSGDPVEASEVLDRAEEHTIALGQITEQIPAIVAKLEDDFPDQLDDLETGYRRLLEENYHFPEKNIEARFQEIRESIRANSSELVTLDLDRAREENTHIQERIDSLYEVFEREIAAYKVAAKNSKMLPRYLAHVKRNNEQLKNEIARLSRKYILSETESLTVKAFEKDIKEIEDSTLAVAEQFGLQEKPFSELQVTFERSIKTLTNVESGQMDVFAAVKDIEKIESQARHNLDVYVTQLHMIKRYMEKRHLPGIPQDFLSAFFTTSSQLEALMDELSRGRINIEAVSRLSEVATVAIANLEDLTYQVVQNATLTEQLLQYSNRYRSFEAGVQSSFEHALRLFEVENDYQASFDEISYALETVEPGVTDRFVNSYEKTREHIRF</sequence>
<comment type="function">
    <text evidence="1">Negative regulator of FtsZ ring formation; modulates the frequency and position of FtsZ ring formation. Inhibits FtsZ ring formation at polar sites. Interacts either with FtsZ or with one of its binding partners to promote depolymerization.</text>
</comment>
<comment type="subcellular location">
    <subcellularLocation>
        <location>Cell membrane</location>
        <topology>Single-pass membrane protein</topology>
    </subcellularLocation>
    <text evidence="1">Colocalized with FtsZ to the nascent septal site.</text>
</comment>
<comment type="similarity">
    <text evidence="1">Belongs to the EzrA family.</text>
</comment>
<evidence type="ECO:0000255" key="1">
    <source>
        <dbReference type="HAMAP-Rule" id="MF_00728"/>
    </source>
</evidence>
<proteinExistence type="inferred from homology"/>
<feature type="chain" id="PRO_0000172893" description="Septation ring formation regulator EzrA">
    <location>
        <begin position="1"/>
        <end position="574"/>
    </location>
</feature>
<feature type="topological domain" description="Extracellular" evidence="1">
    <location>
        <begin position="1"/>
        <end position="7"/>
    </location>
</feature>
<feature type="transmembrane region" description="Helical" evidence="1">
    <location>
        <begin position="8"/>
        <end position="26"/>
    </location>
</feature>
<feature type="topological domain" description="Cytoplasmic" evidence="1">
    <location>
        <begin position="27"/>
        <end position="574"/>
    </location>
</feature>
<feature type="coiled-coil region" evidence="1">
    <location>
        <begin position="102"/>
        <end position="141"/>
    </location>
</feature>
<feature type="coiled-coil region" evidence="1">
    <location>
        <begin position="274"/>
        <end position="350"/>
    </location>
</feature>
<feature type="coiled-coil region" evidence="1">
    <location>
        <begin position="459"/>
        <end position="520"/>
    </location>
</feature>
<name>EZRA_STRP6</name>